<protein>
    <recommendedName>
        <fullName>Probable methylxanthine N7-demethylase NdmC</fullName>
        <ecNumber>1.14.13.128</ecNumber>
    </recommendedName>
    <alternativeName>
        <fullName>7-methylxanthine demethylase</fullName>
    </alternativeName>
</protein>
<organism>
    <name type="scientific">Pseudomonas sp. (strain TJI-51)</name>
    <dbReference type="NCBI Taxonomy" id="985010"/>
    <lineage>
        <taxon>Bacteria</taxon>
        <taxon>Pseudomonadati</taxon>
        <taxon>Pseudomonadota</taxon>
        <taxon>Gammaproteobacteria</taxon>
        <taxon>Pseudomonadales</taxon>
        <taxon>Pseudomonadaceae</taxon>
        <taxon>Pseudomonas</taxon>
    </lineage>
</organism>
<dbReference type="EC" id="1.14.13.128"/>
<dbReference type="EMBL" id="AEWE02000020">
    <property type="protein sequence ID" value="EGB99694.1"/>
    <property type="molecule type" value="Genomic_DNA"/>
</dbReference>
<dbReference type="RefSeq" id="WP_009682459.1">
    <property type="nucleotide sequence ID" value="NZ_AEWE02000020.1"/>
</dbReference>
<dbReference type="SMR" id="F0E1K6"/>
<dbReference type="GO" id="GO:0016491">
    <property type="term" value="F:oxidoreductase activity"/>
    <property type="evidence" value="ECO:0007669"/>
    <property type="project" value="UniProtKB-KW"/>
</dbReference>
<dbReference type="GO" id="GO:0009822">
    <property type="term" value="P:alkaloid catabolic process"/>
    <property type="evidence" value="ECO:0000314"/>
    <property type="project" value="UniProtKB"/>
</dbReference>
<dbReference type="FunFam" id="3.90.380.10:FF:000008">
    <property type="entry name" value="Aromatic ring-hydroxylating dioxygenase subunit alpha"/>
    <property type="match status" value="1"/>
</dbReference>
<dbReference type="Gene3D" id="3.90.380.10">
    <property type="entry name" value="Naphthalene 1,2-dioxygenase Alpha Subunit, Chain A, domain 1"/>
    <property type="match status" value="1"/>
</dbReference>
<dbReference type="InterPro" id="IPR050584">
    <property type="entry name" value="Cholesterol_7-desaturase"/>
</dbReference>
<dbReference type="InterPro" id="IPR044043">
    <property type="entry name" value="VanA_C_cat"/>
</dbReference>
<dbReference type="PANTHER" id="PTHR21266:SF60">
    <property type="entry name" value="3-KETOSTEROID-9-ALPHA-MONOOXYGENASE, OXYGENASE COMPONENT"/>
    <property type="match status" value="1"/>
</dbReference>
<dbReference type="PANTHER" id="PTHR21266">
    <property type="entry name" value="IRON-SULFUR DOMAIN CONTAINING PROTEIN"/>
    <property type="match status" value="1"/>
</dbReference>
<dbReference type="Pfam" id="PF19112">
    <property type="entry name" value="VanA_C"/>
    <property type="match status" value="1"/>
</dbReference>
<dbReference type="SUPFAM" id="SSF55961">
    <property type="entry name" value="Bet v1-like"/>
    <property type="match status" value="1"/>
</dbReference>
<reference key="1">
    <citation type="submission" date="2011-02" db="EMBL/GenBank/DDBJ databases">
        <title>A draft genome sequence and comparative analysis of Pseudomonas putida TJI-51.</title>
        <authorList>
            <person name="Asif H."/>
            <person name="Azim M.K."/>
            <person name="Khan A."/>
        </authorList>
    </citation>
    <scope>NUCLEOTIDE SEQUENCE [GENOMIC DNA]</scope>
    <source>
        <strain>TJI-51</strain>
    </source>
</reference>
<reference key="2">
    <citation type="journal article" date="2012" name="J. Bacteriol.">
        <title>Novel, highly specific N-demethylases enable bacteria to live on caffeine and related purine alkaloids.</title>
        <authorList>
            <person name="Summers R.M."/>
            <person name="Louie T.M."/>
            <person name="Yu C.L."/>
            <person name="Gakhar L."/>
            <person name="Louie K.C."/>
            <person name="Subramanian M."/>
        </authorList>
    </citation>
    <scope>FUNCTION</scope>
    <scope>CATALYTIC ACTIVITY</scope>
    <source>
        <strain>TJI-51</strain>
    </source>
</reference>
<proteinExistence type="evidence at protein level"/>
<sequence>MHAENSFVIDDWYPVGALAETVSGRKYHTRILGTEIWYQLADGTVSAGLADNTAELASKSIYGLLWVSLSDNPRDVIAIPEFAEADRRVVSAGSIRVATSGLRVIENFLDMAHFPFVHTDILGAEPLTEVAAYDVEIDEAADEIRAVNCRFPQPKGSAAASEPVEMQYVYRIARPFIAILYKTCVIDANRLDVLGLFVQPVDQESSIAHTIMCYLDDINTDKQLRDFQQRIFGQDIMILINQVPKALPLNPRHETPVRADALSSAYRRWLNDRNVTFGTTRG</sequence>
<name>NDMC_PSEDT</name>
<evidence type="ECO:0000269" key="1">
    <source>
    </source>
</evidence>
<comment type="function">
    <text evidence="1">Involved in the caffeine degradation, which is the essential first step for assimilating the carbon and nitrogen in caffeine. Probably catalyzes the N7-demethylation of 7-methylxanthine to produce xanthine and formaldehyde.</text>
</comment>
<comment type="catalytic activity">
    <reaction evidence="1">
        <text>7-methylxanthine + NADPH + O2 + H(+) = xanthine + formaldehyde + NADP(+) + H2O</text>
        <dbReference type="Rhea" id="RHEA:30307"/>
        <dbReference type="ChEBI" id="CHEBI:15377"/>
        <dbReference type="ChEBI" id="CHEBI:15378"/>
        <dbReference type="ChEBI" id="CHEBI:15379"/>
        <dbReference type="ChEBI" id="CHEBI:16842"/>
        <dbReference type="ChEBI" id="CHEBI:17712"/>
        <dbReference type="ChEBI" id="CHEBI:48991"/>
        <dbReference type="ChEBI" id="CHEBI:57783"/>
        <dbReference type="ChEBI" id="CHEBI:58349"/>
        <dbReference type="EC" id="1.14.13.128"/>
    </reaction>
</comment>
<comment type="catalytic activity">
    <reaction evidence="1">
        <text>7-methylxanthine + NADH + O2 + H(+) = xanthine + formaldehyde + NAD(+) + H2O</text>
        <dbReference type="Rhea" id="RHEA:30311"/>
        <dbReference type="ChEBI" id="CHEBI:15377"/>
        <dbReference type="ChEBI" id="CHEBI:15378"/>
        <dbReference type="ChEBI" id="CHEBI:15379"/>
        <dbReference type="ChEBI" id="CHEBI:16842"/>
        <dbReference type="ChEBI" id="CHEBI:17712"/>
        <dbReference type="ChEBI" id="CHEBI:48991"/>
        <dbReference type="ChEBI" id="CHEBI:57540"/>
        <dbReference type="ChEBI" id="CHEBI:57945"/>
        <dbReference type="EC" id="1.14.13.128"/>
    </reaction>
</comment>
<accession>F0E1K6</accession>
<keyword id="KW-0017">Alkaloid metabolism</keyword>
<keyword id="KW-0520">NAD</keyword>
<keyword id="KW-0560">Oxidoreductase</keyword>
<feature type="chain" id="PRO_0000422369" description="Probable methylxanthine N7-demethylase NdmC">
    <location>
        <begin position="1"/>
        <end position="282"/>
    </location>
</feature>
<gene>
    <name type="ORF">G1E_06898</name>
</gene>